<organism>
    <name type="scientific">Homarus americanus</name>
    <name type="common">American lobster</name>
    <dbReference type="NCBI Taxonomy" id="6706"/>
    <lineage>
        <taxon>Eukaryota</taxon>
        <taxon>Metazoa</taxon>
        <taxon>Ecdysozoa</taxon>
        <taxon>Arthropoda</taxon>
        <taxon>Crustacea</taxon>
        <taxon>Multicrustacea</taxon>
        <taxon>Malacostraca</taxon>
        <taxon>Eumalacostraca</taxon>
        <taxon>Eucarida</taxon>
        <taxon>Decapoda</taxon>
        <taxon>Pleocyemata</taxon>
        <taxon>Astacidea</taxon>
        <taxon>Nephropoidea</taxon>
        <taxon>Nephropidae</taxon>
        <taxon>Homarus</taxon>
    </lineage>
</organism>
<keyword id="KW-0193">Cuticle</keyword>
<keyword id="KW-0903">Direct protein sequencing</keyword>
<dbReference type="OrthoDB" id="6359642at2759"/>
<dbReference type="GO" id="GO:0062129">
    <property type="term" value="C:chitin-based extracellular matrix"/>
    <property type="evidence" value="ECO:0007669"/>
    <property type="project" value="TreeGrafter"/>
</dbReference>
<dbReference type="GO" id="GO:0008010">
    <property type="term" value="F:structural constituent of chitin-based larval cuticle"/>
    <property type="evidence" value="ECO:0007669"/>
    <property type="project" value="TreeGrafter"/>
</dbReference>
<dbReference type="InterPro" id="IPR031311">
    <property type="entry name" value="CHIT_BIND_RR_consensus"/>
</dbReference>
<dbReference type="InterPro" id="IPR050468">
    <property type="entry name" value="Cuticle_Struct_Prot"/>
</dbReference>
<dbReference type="InterPro" id="IPR000618">
    <property type="entry name" value="Insect_cuticle"/>
</dbReference>
<dbReference type="PANTHER" id="PTHR10380">
    <property type="entry name" value="CUTICLE PROTEIN"/>
    <property type="match status" value="1"/>
</dbReference>
<dbReference type="PANTHER" id="PTHR10380:SF237">
    <property type="entry name" value="CUTICULAR PROTEIN 65AU, ISOFORM A-RELATED"/>
    <property type="match status" value="1"/>
</dbReference>
<dbReference type="Pfam" id="PF00379">
    <property type="entry name" value="Chitin_bind_4"/>
    <property type="match status" value="1"/>
</dbReference>
<dbReference type="PRINTS" id="PR00947">
    <property type="entry name" value="CUTICLE"/>
</dbReference>
<dbReference type="PROSITE" id="PS00233">
    <property type="entry name" value="CHIT_BIND_RR_1"/>
    <property type="match status" value="1"/>
</dbReference>
<dbReference type="PROSITE" id="PS51155">
    <property type="entry name" value="CHIT_BIND_RR_2"/>
    <property type="match status" value="1"/>
</dbReference>
<sequence length="105" mass="11683">DRDAQTLTDERNDQGDGNFRYEFETSNGIYTQKTGTPGSEGQSNYQGSFRFPLEDGTIAEVTYIADENGFQPSSDLLPVGPPAPPHVQRLLEIAEDQRRQGITFD</sequence>
<evidence type="ECO:0000255" key="1">
    <source>
        <dbReference type="PROSITE-ProRule" id="PRU00497"/>
    </source>
</evidence>
<evidence type="ECO:0000256" key="2">
    <source>
        <dbReference type="SAM" id="MobiDB-lite"/>
    </source>
</evidence>
<reference key="1">
    <citation type="journal article" date="1998" name="Comp. Biochem. Physiol.">
        <title>Characterization of exoskeletal proteins from the American lobster, Homarus americanus.</title>
        <authorList>
            <person name="Nousiainen M."/>
            <person name="Rafn K."/>
            <person name="Skou L."/>
            <person name="Roepstorff P."/>
            <person name="Andersen S.O."/>
        </authorList>
    </citation>
    <scope>PROTEIN SEQUENCE</scope>
    <source>
        <tissue>Cuticle</tissue>
    </source>
</reference>
<name>CU04_HOMAM</name>
<proteinExistence type="evidence at protein level"/>
<protein>
    <recommendedName>
        <fullName>Cuticle protein AMP4</fullName>
    </recommendedName>
    <alternativeName>
        <fullName>HA-AMP4</fullName>
    </alternativeName>
</protein>
<accession>P81388</accession>
<comment type="tissue specificity">
    <text>Arthrodial membrane.</text>
</comment>
<feature type="chain" id="PRO_0000196154" description="Cuticle protein AMP4">
    <location>
        <begin position="1"/>
        <end position="105"/>
    </location>
</feature>
<feature type="domain" description="Chitin-binding type R&amp;R" evidence="1">
    <location>
        <begin position="16"/>
        <end position="81"/>
    </location>
</feature>
<feature type="region of interest" description="Disordered" evidence="2">
    <location>
        <begin position="1"/>
        <end position="21"/>
    </location>
</feature>